<evidence type="ECO:0000255" key="1">
    <source>
        <dbReference type="HAMAP-Rule" id="MF_00480"/>
    </source>
</evidence>
<evidence type="ECO:0000305" key="2"/>
<organism>
    <name type="scientific">Xanthobacter autotrophicus (strain ATCC BAA-1158 / Py2)</name>
    <dbReference type="NCBI Taxonomy" id="78245"/>
    <lineage>
        <taxon>Bacteria</taxon>
        <taxon>Pseudomonadati</taxon>
        <taxon>Pseudomonadota</taxon>
        <taxon>Alphaproteobacteria</taxon>
        <taxon>Hyphomicrobiales</taxon>
        <taxon>Xanthobacteraceae</taxon>
        <taxon>Xanthobacter</taxon>
    </lineage>
</organism>
<sequence>MSRRHKAERREVIPDPKYGSTTLSRFMNSVMRDGKKSVAEGIVYGALDVVETKAKHDPVDVFIQALENVAPAVEVRSRRVGGATYQVPVEVRNERRQTLAIRWLIASARARNEKTMVERLSAELLDAANNRGAAVKKREDTHRMAEANRAFSHYRW</sequence>
<protein>
    <recommendedName>
        <fullName evidence="1">Small ribosomal subunit protein uS7</fullName>
    </recommendedName>
    <alternativeName>
        <fullName evidence="2">30S ribosomal protein S7</fullName>
    </alternativeName>
</protein>
<dbReference type="EMBL" id="CP000781">
    <property type="protein sequence ID" value="ABS66920.1"/>
    <property type="molecule type" value="Genomic_DNA"/>
</dbReference>
<dbReference type="SMR" id="A7IFX7"/>
<dbReference type="STRING" id="78245.Xaut_1675"/>
<dbReference type="KEGG" id="xau:Xaut_1675"/>
<dbReference type="eggNOG" id="COG0049">
    <property type="taxonomic scope" value="Bacteria"/>
</dbReference>
<dbReference type="HOGENOM" id="CLU_072226_1_1_5"/>
<dbReference type="OrthoDB" id="9807653at2"/>
<dbReference type="PhylomeDB" id="A7IFX7"/>
<dbReference type="Proteomes" id="UP000002417">
    <property type="component" value="Chromosome"/>
</dbReference>
<dbReference type="GO" id="GO:0015935">
    <property type="term" value="C:small ribosomal subunit"/>
    <property type="evidence" value="ECO:0007669"/>
    <property type="project" value="InterPro"/>
</dbReference>
<dbReference type="GO" id="GO:0019843">
    <property type="term" value="F:rRNA binding"/>
    <property type="evidence" value="ECO:0007669"/>
    <property type="project" value="UniProtKB-UniRule"/>
</dbReference>
<dbReference type="GO" id="GO:0003735">
    <property type="term" value="F:structural constituent of ribosome"/>
    <property type="evidence" value="ECO:0007669"/>
    <property type="project" value="InterPro"/>
</dbReference>
<dbReference type="GO" id="GO:0000049">
    <property type="term" value="F:tRNA binding"/>
    <property type="evidence" value="ECO:0007669"/>
    <property type="project" value="UniProtKB-UniRule"/>
</dbReference>
<dbReference type="GO" id="GO:0006412">
    <property type="term" value="P:translation"/>
    <property type="evidence" value="ECO:0007669"/>
    <property type="project" value="UniProtKB-UniRule"/>
</dbReference>
<dbReference type="CDD" id="cd14869">
    <property type="entry name" value="uS7_Bacteria"/>
    <property type="match status" value="1"/>
</dbReference>
<dbReference type="FunFam" id="1.10.455.10:FF:000001">
    <property type="entry name" value="30S ribosomal protein S7"/>
    <property type="match status" value="1"/>
</dbReference>
<dbReference type="Gene3D" id="1.10.455.10">
    <property type="entry name" value="Ribosomal protein S7 domain"/>
    <property type="match status" value="1"/>
</dbReference>
<dbReference type="HAMAP" id="MF_00480_B">
    <property type="entry name" value="Ribosomal_uS7_B"/>
    <property type="match status" value="1"/>
</dbReference>
<dbReference type="InterPro" id="IPR000235">
    <property type="entry name" value="Ribosomal_uS7"/>
</dbReference>
<dbReference type="InterPro" id="IPR005717">
    <property type="entry name" value="Ribosomal_uS7_bac/org-type"/>
</dbReference>
<dbReference type="InterPro" id="IPR020606">
    <property type="entry name" value="Ribosomal_uS7_CS"/>
</dbReference>
<dbReference type="InterPro" id="IPR023798">
    <property type="entry name" value="Ribosomal_uS7_dom"/>
</dbReference>
<dbReference type="InterPro" id="IPR036823">
    <property type="entry name" value="Ribosomal_uS7_dom_sf"/>
</dbReference>
<dbReference type="NCBIfam" id="TIGR01029">
    <property type="entry name" value="rpsG_bact"/>
    <property type="match status" value="1"/>
</dbReference>
<dbReference type="PANTHER" id="PTHR11205">
    <property type="entry name" value="RIBOSOMAL PROTEIN S7"/>
    <property type="match status" value="1"/>
</dbReference>
<dbReference type="Pfam" id="PF00177">
    <property type="entry name" value="Ribosomal_S7"/>
    <property type="match status" value="1"/>
</dbReference>
<dbReference type="PIRSF" id="PIRSF002122">
    <property type="entry name" value="RPS7p_RPS7a_RPS5e_RPS7o"/>
    <property type="match status" value="1"/>
</dbReference>
<dbReference type="SUPFAM" id="SSF47973">
    <property type="entry name" value="Ribosomal protein S7"/>
    <property type="match status" value="1"/>
</dbReference>
<dbReference type="PROSITE" id="PS00052">
    <property type="entry name" value="RIBOSOMAL_S7"/>
    <property type="match status" value="1"/>
</dbReference>
<keyword id="KW-1185">Reference proteome</keyword>
<keyword id="KW-0687">Ribonucleoprotein</keyword>
<keyword id="KW-0689">Ribosomal protein</keyword>
<keyword id="KW-0694">RNA-binding</keyword>
<keyword id="KW-0699">rRNA-binding</keyword>
<keyword id="KW-0820">tRNA-binding</keyword>
<name>RS7_XANP2</name>
<comment type="function">
    <text evidence="1">One of the primary rRNA binding proteins, it binds directly to 16S rRNA where it nucleates assembly of the head domain of the 30S subunit. Is located at the subunit interface close to the decoding center, probably blocks exit of the E-site tRNA.</text>
</comment>
<comment type="subunit">
    <text evidence="1">Part of the 30S ribosomal subunit. Contacts proteins S9 and S11.</text>
</comment>
<comment type="similarity">
    <text evidence="1">Belongs to the universal ribosomal protein uS7 family.</text>
</comment>
<proteinExistence type="inferred from homology"/>
<reference key="1">
    <citation type="submission" date="2007-07" db="EMBL/GenBank/DDBJ databases">
        <title>Complete sequence of chromosome of Xanthobacter autotrophicus Py2.</title>
        <authorList>
            <consortium name="US DOE Joint Genome Institute"/>
            <person name="Copeland A."/>
            <person name="Lucas S."/>
            <person name="Lapidus A."/>
            <person name="Barry K."/>
            <person name="Glavina del Rio T."/>
            <person name="Hammon N."/>
            <person name="Israni S."/>
            <person name="Dalin E."/>
            <person name="Tice H."/>
            <person name="Pitluck S."/>
            <person name="Sims D."/>
            <person name="Brettin T."/>
            <person name="Bruce D."/>
            <person name="Detter J.C."/>
            <person name="Han C."/>
            <person name="Tapia R."/>
            <person name="Brainard J."/>
            <person name="Schmutz J."/>
            <person name="Larimer F."/>
            <person name="Land M."/>
            <person name="Hauser L."/>
            <person name="Kyrpides N."/>
            <person name="Kim E."/>
            <person name="Ensigns S.A."/>
            <person name="Richardson P."/>
        </authorList>
    </citation>
    <scope>NUCLEOTIDE SEQUENCE [LARGE SCALE GENOMIC DNA]</scope>
    <source>
        <strain>ATCC BAA-1158 / Py2</strain>
    </source>
</reference>
<accession>A7IFX7</accession>
<feature type="chain" id="PRO_1000126027" description="Small ribosomal subunit protein uS7">
    <location>
        <begin position="1"/>
        <end position="156"/>
    </location>
</feature>
<gene>
    <name evidence="1" type="primary">rpsG</name>
    <name type="ordered locus">Xaut_1675</name>
</gene>